<proteinExistence type="evidence at protein level"/>
<accession>P0CT67</accession>
<accession>O94754</accession>
<accession>Q9USH4</accession>
<reference key="1">
    <citation type="journal article" date="2002" name="Nature">
        <title>The genome sequence of Schizosaccharomyces pombe.</title>
        <authorList>
            <person name="Wood V."/>
            <person name="Gwilliam R."/>
            <person name="Rajandream M.A."/>
            <person name="Lyne M.H."/>
            <person name="Lyne R."/>
            <person name="Stewart A."/>
            <person name="Sgouros J.G."/>
            <person name="Peat N."/>
            <person name="Hayles J."/>
            <person name="Baker S.G."/>
            <person name="Basham D."/>
            <person name="Bowman S."/>
            <person name="Brooks K."/>
            <person name="Brown D."/>
            <person name="Brown S."/>
            <person name="Chillingworth T."/>
            <person name="Churcher C.M."/>
            <person name="Collins M."/>
            <person name="Connor R."/>
            <person name="Cronin A."/>
            <person name="Davis P."/>
            <person name="Feltwell T."/>
            <person name="Fraser A."/>
            <person name="Gentles S."/>
            <person name="Goble A."/>
            <person name="Hamlin N."/>
            <person name="Harris D.E."/>
            <person name="Hidalgo J."/>
            <person name="Hodgson G."/>
            <person name="Holroyd S."/>
            <person name="Hornsby T."/>
            <person name="Howarth S."/>
            <person name="Huckle E.J."/>
            <person name="Hunt S."/>
            <person name="Jagels K."/>
            <person name="James K.D."/>
            <person name="Jones L."/>
            <person name="Jones M."/>
            <person name="Leather S."/>
            <person name="McDonald S."/>
            <person name="McLean J."/>
            <person name="Mooney P."/>
            <person name="Moule S."/>
            <person name="Mungall K.L."/>
            <person name="Murphy L.D."/>
            <person name="Niblett D."/>
            <person name="Odell C."/>
            <person name="Oliver K."/>
            <person name="O'Neil S."/>
            <person name="Pearson D."/>
            <person name="Quail M.A."/>
            <person name="Rabbinowitsch E."/>
            <person name="Rutherford K.M."/>
            <person name="Rutter S."/>
            <person name="Saunders D."/>
            <person name="Seeger K."/>
            <person name="Sharp S."/>
            <person name="Skelton J."/>
            <person name="Simmonds M.N."/>
            <person name="Squares R."/>
            <person name="Squares S."/>
            <person name="Stevens K."/>
            <person name="Taylor K."/>
            <person name="Taylor R.G."/>
            <person name="Tivey A."/>
            <person name="Walsh S.V."/>
            <person name="Warren T."/>
            <person name="Whitehead S."/>
            <person name="Woodward J.R."/>
            <person name="Volckaert G."/>
            <person name="Aert R."/>
            <person name="Robben J."/>
            <person name="Grymonprez B."/>
            <person name="Weltjens I."/>
            <person name="Vanstreels E."/>
            <person name="Rieger M."/>
            <person name="Schaefer M."/>
            <person name="Mueller-Auer S."/>
            <person name="Gabel C."/>
            <person name="Fuchs M."/>
            <person name="Duesterhoeft A."/>
            <person name="Fritzc C."/>
            <person name="Holzer E."/>
            <person name="Moestl D."/>
            <person name="Hilbert H."/>
            <person name="Borzym K."/>
            <person name="Langer I."/>
            <person name="Beck A."/>
            <person name="Lehrach H."/>
            <person name="Reinhardt R."/>
            <person name="Pohl T.M."/>
            <person name="Eger P."/>
            <person name="Zimmermann W."/>
            <person name="Wedler H."/>
            <person name="Wambutt R."/>
            <person name="Purnelle B."/>
            <person name="Goffeau A."/>
            <person name="Cadieu E."/>
            <person name="Dreano S."/>
            <person name="Gloux S."/>
            <person name="Lelaure V."/>
            <person name="Mottier S."/>
            <person name="Galibert F."/>
            <person name="Aves S.J."/>
            <person name="Xiang Z."/>
            <person name="Hunt C."/>
            <person name="Moore K."/>
            <person name="Hurst S.M."/>
            <person name="Lucas M."/>
            <person name="Rochet M."/>
            <person name="Gaillardin C."/>
            <person name="Tallada V.A."/>
            <person name="Garzon A."/>
            <person name="Thode G."/>
            <person name="Daga R.R."/>
            <person name="Cruzado L."/>
            <person name="Jimenez J."/>
            <person name="Sanchez M."/>
            <person name="del Rey F."/>
            <person name="Benito J."/>
            <person name="Dominguez A."/>
            <person name="Revuelta J.L."/>
            <person name="Moreno S."/>
            <person name="Armstrong J."/>
            <person name="Forsburg S.L."/>
            <person name="Cerutti L."/>
            <person name="Lowe T."/>
            <person name="McCombie W.R."/>
            <person name="Paulsen I."/>
            <person name="Potashkin J."/>
            <person name="Shpakovski G.V."/>
            <person name="Ussery D."/>
            <person name="Barrell B.G."/>
            <person name="Nurse P."/>
        </authorList>
    </citation>
    <scope>NUCLEOTIDE SEQUENCE [LARGE SCALE GENOMIC DNA]</scope>
    <source>
        <strain>972 / ATCC 24843</strain>
    </source>
</reference>
<reference key="2">
    <citation type="journal article" date="2006" name="Nat. Biotechnol.">
        <title>ORFeome cloning and global analysis of protein localization in the fission yeast Schizosaccharomyces pombe.</title>
        <authorList>
            <person name="Matsuyama A."/>
            <person name="Arai R."/>
            <person name="Yashiroda Y."/>
            <person name="Shirai A."/>
            <person name="Kamata A."/>
            <person name="Sekido S."/>
            <person name="Kobayashi Y."/>
            <person name="Hashimoto A."/>
            <person name="Hamamoto M."/>
            <person name="Hiraoka Y."/>
            <person name="Horinouchi S."/>
            <person name="Yoshida M."/>
        </authorList>
    </citation>
    <scope>SUBCELLULAR LOCATION [LARGE SCALE ANALYSIS]</scope>
</reference>
<keyword id="KW-0002">3D-structure</keyword>
<keyword id="KW-0963">Cytoplasm</keyword>
<keyword id="KW-0539">Nucleus</keyword>
<keyword id="KW-1185">Reference proteome</keyword>
<keyword id="KW-0687">Ribonucleoprotein</keyword>
<keyword id="KW-0689">Ribosomal protein</keyword>
<keyword id="KW-0694">RNA-binding</keyword>
<keyword id="KW-0699">rRNA-binding</keyword>
<evidence type="ECO:0000250" key="1">
    <source>
        <dbReference type="UniProtKB" id="P0CX56"/>
    </source>
</evidence>
<evidence type="ECO:0000269" key="2">
    <source>
    </source>
</evidence>
<evidence type="ECO:0000305" key="3"/>
<protein>
    <recommendedName>
        <fullName evidence="3">Small ribosomal subunit protein uS13B</fullName>
    </recommendedName>
    <alternativeName>
        <fullName>40S ribosomal protein S18-B</fullName>
    </alternativeName>
</protein>
<dbReference type="EMBL" id="CU329672">
    <property type="protein sequence ID" value="CAB58414.2"/>
    <property type="molecule type" value="Genomic_DNA"/>
</dbReference>
<dbReference type="PIR" id="T39575">
    <property type="entry name" value="T39575"/>
</dbReference>
<dbReference type="RefSeq" id="NP_588057.2">
    <property type="nucleotide sequence ID" value="NM_001023048.3"/>
</dbReference>
<dbReference type="PDB" id="9AXT">
    <property type="method" value="EM"/>
    <property type="resolution" value="2.40 A"/>
    <property type="chains" value="AV=1-152"/>
</dbReference>
<dbReference type="PDB" id="9AXV">
    <property type="method" value="EM"/>
    <property type="resolution" value="2.40 A"/>
    <property type="chains" value="AV=1-152"/>
</dbReference>
<dbReference type="PDBsum" id="9AXT"/>
<dbReference type="PDBsum" id="9AXV"/>
<dbReference type="EMDB" id="EMD-43972"/>
<dbReference type="EMDB" id="EMD-43976"/>
<dbReference type="SMR" id="P0CT67"/>
<dbReference type="FunCoup" id="P0CT67">
    <property type="interactions" value="558"/>
</dbReference>
<dbReference type="STRING" id="284812.P0CT67"/>
<dbReference type="iPTMnet" id="P0CT67"/>
<dbReference type="EnsemblFungi" id="SPBC16D10.11c.1">
    <property type="protein sequence ID" value="SPBC16D10.11c.1:pep"/>
    <property type="gene ID" value="SPBC16D10.11c"/>
</dbReference>
<dbReference type="EnsemblFungi" id="SPCC1259.01c.1">
    <property type="protein sequence ID" value="SPCC1259.01c.1:pep"/>
    <property type="gene ID" value="SPCC1259.01c"/>
</dbReference>
<dbReference type="GeneID" id="3361064"/>
<dbReference type="KEGG" id="spo:2540180"/>
<dbReference type="KEGG" id="spo:3361064"/>
<dbReference type="PomBase" id="SPCC1259.01c">
    <property type="gene designation" value="rps1802"/>
</dbReference>
<dbReference type="VEuPathDB" id="FungiDB:SPBC16D10.11c"/>
<dbReference type="VEuPathDB" id="FungiDB:SPCC1259.01c"/>
<dbReference type="InParanoid" id="P0CT67"/>
<dbReference type="OMA" id="SYKGVRH"/>
<dbReference type="PhylomeDB" id="P0CT67"/>
<dbReference type="Reactome" id="R-SPO-156827">
    <property type="pathway name" value="L13a-mediated translational silencing of Ceruloplasmin expression"/>
</dbReference>
<dbReference type="Reactome" id="R-SPO-1799339">
    <property type="pathway name" value="SRP-dependent cotranslational protein targeting to membrane"/>
</dbReference>
<dbReference type="Reactome" id="R-SPO-72649">
    <property type="pathway name" value="Translation initiation complex formation"/>
</dbReference>
<dbReference type="Reactome" id="R-SPO-72689">
    <property type="pathway name" value="Formation of a pool of free 40S subunits"/>
</dbReference>
<dbReference type="Reactome" id="R-SPO-72695">
    <property type="pathway name" value="Formation of the ternary complex, and subsequently, the 43S complex"/>
</dbReference>
<dbReference type="Reactome" id="R-SPO-72702">
    <property type="pathway name" value="Ribosomal scanning and start codon recognition"/>
</dbReference>
<dbReference type="Reactome" id="R-SPO-72706">
    <property type="pathway name" value="GTP hydrolysis and joining of the 60S ribosomal subunit"/>
</dbReference>
<dbReference type="Reactome" id="R-SPO-975956">
    <property type="pathway name" value="Nonsense Mediated Decay (NMD) independent of the Exon Junction Complex (EJC)"/>
</dbReference>
<dbReference type="Reactome" id="R-SPO-975957">
    <property type="pathway name" value="Nonsense Mediated Decay (NMD) enhanced by the Exon Junction Complex (EJC)"/>
</dbReference>
<dbReference type="PRO" id="PR:P0CT67"/>
<dbReference type="Proteomes" id="UP000002485">
    <property type="component" value="Chromosome III"/>
</dbReference>
<dbReference type="GO" id="GO:0005829">
    <property type="term" value="C:cytosol"/>
    <property type="evidence" value="ECO:0007005"/>
    <property type="project" value="PomBase"/>
</dbReference>
<dbReference type="GO" id="GO:0022627">
    <property type="term" value="C:cytosolic small ribosomal subunit"/>
    <property type="evidence" value="ECO:0000269"/>
    <property type="project" value="PomBase"/>
</dbReference>
<dbReference type="GO" id="GO:0005634">
    <property type="term" value="C:nucleus"/>
    <property type="evidence" value="ECO:0007005"/>
    <property type="project" value="PomBase"/>
</dbReference>
<dbReference type="GO" id="GO:0015935">
    <property type="term" value="C:small ribosomal subunit"/>
    <property type="evidence" value="ECO:0000318"/>
    <property type="project" value="GO_Central"/>
</dbReference>
<dbReference type="GO" id="GO:0019843">
    <property type="term" value="F:rRNA binding"/>
    <property type="evidence" value="ECO:0000255"/>
    <property type="project" value="PomBase"/>
</dbReference>
<dbReference type="GO" id="GO:0003735">
    <property type="term" value="F:structural constituent of ribosome"/>
    <property type="evidence" value="ECO:0000266"/>
    <property type="project" value="PomBase"/>
</dbReference>
<dbReference type="GO" id="GO:0002181">
    <property type="term" value="P:cytoplasmic translation"/>
    <property type="evidence" value="ECO:0000266"/>
    <property type="project" value="PomBase"/>
</dbReference>
<dbReference type="GO" id="GO:0042254">
    <property type="term" value="P:ribosome biogenesis"/>
    <property type="evidence" value="ECO:0000266"/>
    <property type="project" value="PomBase"/>
</dbReference>
<dbReference type="FunFam" id="1.10.8.50:FF:000002">
    <property type="entry name" value="40S ribosomal protein S18"/>
    <property type="match status" value="1"/>
</dbReference>
<dbReference type="FunFam" id="4.10.910.10:FF:000002">
    <property type="entry name" value="40S ribosomal protein S18"/>
    <property type="match status" value="1"/>
</dbReference>
<dbReference type="Gene3D" id="1.10.8.50">
    <property type="match status" value="1"/>
</dbReference>
<dbReference type="Gene3D" id="4.10.910.10">
    <property type="entry name" value="30s ribosomal protein s13, domain 2"/>
    <property type="match status" value="1"/>
</dbReference>
<dbReference type="HAMAP" id="MF_01315">
    <property type="entry name" value="Ribosomal_uS13"/>
    <property type="match status" value="1"/>
</dbReference>
<dbReference type="InterPro" id="IPR027437">
    <property type="entry name" value="Rbsml_uS13_C"/>
</dbReference>
<dbReference type="InterPro" id="IPR001892">
    <property type="entry name" value="Ribosomal_uS13"/>
</dbReference>
<dbReference type="InterPro" id="IPR010979">
    <property type="entry name" value="Ribosomal_uS13-like_H2TH"/>
</dbReference>
<dbReference type="InterPro" id="IPR018269">
    <property type="entry name" value="Ribosomal_uS13_CS"/>
</dbReference>
<dbReference type="NCBIfam" id="NF003140">
    <property type="entry name" value="PRK04053.1"/>
    <property type="match status" value="1"/>
</dbReference>
<dbReference type="PANTHER" id="PTHR10871">
    <property type="entry name" value="30S RIBOSOMAL PROTEIN S13/40S RIBOSOMAL PROTEIN S18"/>
    <property type="match status" value="1"/>
</dbReference>
<dbReference type="PANTHER" id="PTHR10871:SF3">
    <property type="entry name" value="SMALL RIBOSOMAL SUBUNIT PROTEIN US13"/>
    <property type="match status" value="1"/>
</dbReference>
<dbReference type="Pfam" id="PF00416">
    <property type="entry name" value="Ribosomal_S13"/>
    <property type="match status" value="1"/>
</dbReference>
<dbReference type="PIRSF" id="PIRSF002134">
    <property type="entry name" value="Ribosomal_S13"/>
    <property type="match status" value="1"/>
</dbReference>
<dbReference type="SUPFAM" id="SSF46946">
    <property type="entry name" value="S13-like H2TH domain"/>
    <property type="match status" value="1"/>
</dbReference>
<dbReference type="PROSITE" id="PS00646">
    <property type="entry name" value="RIBOSOMAL_S13_1"/>
    <property type="match status" value="1"/>
</dbReference>
<dbReference type="PROSITE" id="PS50159">
    <property type="entry name" value="RIBOSOMAL_S13_2"/>
    <property type="match status" value="1"/>
</dbReference>
<comment type="function">
    <text evidence="1">Component of the ribosome, a large ribonucleoprotein complex responsible for the synthesis of proteins in the cell. The small ribosomal subunit (SSU) binds messenger RNAs (mRNAs) and translates the encoded message by selecting cognate aminoacyl-transfer RNA (tRNA) molecules. The large subunit (LSU) contains the ribosomal catalytic site termed the peptidyl transferase center (PTC), which catalyzes the formation of peptide bonds, thereby polymerizing the amino acids delivered by tRNAs into a polypeptide chain. The nascent polypeptides leave the ribosome through a tunnel in the LSU and interact with protein factors that function in enzymatic processing, targeting, and the membrane insertion of nascent chains at the exit of the ribosomal tunnel.</text>
</comment>
<comment type="subunit">
    <text evidence="1">Component of the small ribosomal subunit (SSU). Mature yeast ribosomes consist of a small (40S) and a large (60S) subunit. The 40S small subunit contains 1 molecule of ribosomal RNA (18S rRNA) and at least 33 different proteins. The large 60S subunit contains 3 rRNA molecules (25S, 5.8S and 5S rRNA) and at least 46 different proteins.</text>
</comment>
<comment type="subcellular location">
    <subcellularLocation>
        <location evidence="2">Cytoplasm</location>
    </subcellularLocation>
    <subcellularLocation>
        <location evidence="2">Nucleus</location>
    </subcellularLocation>
</comment>
<comment type="miscellaneous">
    <text>There are 2 genes for uS13 in S.pombe.</text>
</comment>
<comment type="similarity">
    <text evidence="3">Belongs to the universal ribosomal protein uS13 family.</text>
</comment>
<name>RS18B_SCHPO</name>
<gene>
    <name type="primary">rps1802</name>
    <name type="synonym">rps18b</name>
    <name type="ORF">SPCC1259.01c</name>
    <name type="ORF">SPCC825.06c</name>
</gene>
<feature type="chain" id="PRO_0000433418" description="Small ribosomal subunit protein uS13B">
    <location>
        <begin position="1"/>
        <end position="152"/>
    </location>
</feature>
<organism>
    <name type="scientific">Schizosaccharomyces pombe (strain 972 / ATCC 24843)</name>
    <name type="common">Fission yeast</name>
    <dbReference type="NCBI Taxonomy" id="284812"/>
    <lineage>
        <taxon>Eukaryota</taxon>
        <taxon>Fungi</taxon>
        <taxon>Dikarya</taxon>
        <taxon>Ascomycota</taxon>
        <taxon>Taphrinomycotina</taxon>
        <taxon>Schizosaccharomycetes</taxon>
        <taxon>Schizosaccharomycetales</taxon>
        <taxon>Schizosaccharomycetaceae</taxon>
        <taxon>Schizosaccharomyces</taxon>
    </lineage>
</organism>
<sequence length="152" mass="17435">MSLVVPDNFQHILRLLNTNVDGKVKVMFAMTQIKGVGRRYANIVCKKADIDMSKRAGELTTEELERIVTIIQNPSQFKIPSWFLNRQKDINDGKSFQLLANNVDSKLREDLERLKKIQTHRGLRHALDLRVRGQHTKTTGRRGKTVGVSKKK</sequence>